<gene>
    <name type="ordered locus">ML2424</name>
    <name type="ORF">B2168_F1_26</name>
</gene>
<sequence length="300" mass="32276">MASPDLSNAYNGRIDLGSLANNASINRALNDMPTAVDDAGVRPQPPIDLTAAAFFDVDNTLVQGSSAVHFGRGLAARDYFTYRDVLGFIYAQAKFQLLGKENSQDVAAGQRKALAFIEGRSVEQLVALGEEIYDEIIADKIWAGTRQLTQIHLDAGQQVWLITATPYELAATIARRLGLTGALGTVAESVDGIFTGRLVDELLHGVGKAHAVRSLAIREGLNLKRCTAYSDSYNDVPMLSLVGTAVAINPDAQLRSLARERGWEIRDFRTARKAARIGVPSALALGGALAAAVSRRRDRE</sequence>
<feature type="chain" id="PRO_0000156892" description="Putative hydrolase ML2424">
    <location>
        <begin position="1"/>
        <end position="300"/>
    </location>
</feature>
<feature type="active site" description="Nucleophile" evidence="2">
    <location>
        <position position="56"/>
    </location>
</feature>
<feature type="active site" description="Proton donor" evidence="2">
    <location>
        <position position="58"/>
    </location>
</feature>
<feature type="binding site" evidence="1">
    <location>
        <position position="56"/>
    </location>
    <ligand>
        <name>Mg(2+)</name>
        <dbReference type="ChEBI" id="CHEBI:18420"/>
    </ligand>
</feature>
<feature type="binding site" evidence="1">
    <location>
        <position position="58"/>
    </location>
    <ligand>
        <name>Mg(2+)</name>
        <dbReference type="ChEBI" id="CHEBI:18420"/>
    </ligand>
</feature>
<feature type="binding site" evidence="1">
    <location>
        <position position="231"/>
    </location>
    <ligand>
        <name>Mg(2+)</name>
        <dbReference type="ChEBI" id="CHEBI:18420"/>
    </ligand>
</feature>
<proteinExistence type="inferred from homology"/>
<dbReference type="EC" id="3.1.-.-"/>
<dbReference type="EMBL" id="U00018">
    <property type="protein sequence ID" value="AAA17250.1"/>
    <property type="molecule type" value="Genomic_DNA"/>
</dbReference>
<dbReference type="EMBL" id="AL583925">
    <property type="protein sequence ID" value="CAC31940.1"/>
    <property type="molecule type" value="Genomic_DNA"/>
</dbReference>
<dbReference type="PIR" id="S72914">
    <property type="entry name" value="S72914"/>
</dbReference>
<dbReference type="RefSeq" id="NP_302568.1">
    <property type="nucleotide sequence ID" value="NC_002677.1"/>
</dbReference>
<dbReference type="RefSeq" id="WP_010908888.1">
    <property type="nucleotide sequence ID" value="NC_002677.1"/>
</dbReference>
<dbReference type="SMR" id="Q49823"/>
<dbReference type="STRING" id="272631.gene:17576286"/>
<dbReference type="KEGG" id="mle:ML2424"/>
<dbReference type="PATRIC" id="fig|272631.5.peg.4662"/>
<dbReference type="Leproma" id="ML2424"/>
<dbReference type="eggNOG" id="COG0560">
    <property type="taxonomic scope" value="Bacteria"/>
</dbReference>
<dbReference type="HOGENOM" id="CLU_052657_0_1_11"/>
<dbReference type="OrthoDB" id="25607at2"/>
<dbReference type="Proteomes" id="UP000000806">
    <property type="component" value="Chromosome"/>
</dbReference>
<dbReference type="GO" id="GO:0016787">
    <property type="term" value="F:hydrolase activity"/>
    <property type="evidence" value="ECO:0007669"/>
    <property type="project" value="UniProtKB-KW"/>
</dbReference>
<dbReference type="GO" id="GO:0046872">
    <property type="term" value="F:metal ion binding"/>
    <property type="evidence" value="ECO:0007669"/>
    <property type="project" value="UniProtKB-KW"/>
</dbReference>
<dbReference type="CDD" id="cd02612">
    <property type="entry name" value="HAD_PGPPase"/>
    <property type="match status" value="1"/>
</dbReference>
<dbReference type="FunFam" id="3.40.50.1000:FF:000025">
    <property type="entry name" value="HAD hydrolase, family IB"/>
    <property type="match status" value="1"/>
</dbReference>
<dbReference type="Gene3D" id="3.40.50.1000">
    <property type="entry name" value="HAD superfamily/HAD-like"/>
    <property type="match status" value="1"/>
</dbReference>
<dbReference type="Gene3D" id="1.20.1440.100">
    <property type="entry name" value="SG protein - dephosphorylation function"/>
    <property type="match status" value="1"/>
</dbReference>
<dbReference type="InterPro" id="IPR050582">
    <property type="entry name" value="HAD-like_SerB"/>
</dbReference>
<dbReference type="InterPro" id="IPR036412">
    <property type="entry name" value="HAD-like_sf"/>
</dbReference>
<dbReference type="InterPro" id="IPR006385">
    <property type="entry name" value="HAD_hydro_SerB1"/>
</dbReference>
<dbReference type="InterPro" id="IPR023214">
    <property type="entry name" value="HAD_sf"/>
</dbReference>
<dbReference type="NCBIfam" id="TIGR01488">
    <property type="entry name" value="HAD-SF-IB"/>
    <property type="match status" value="1"/>
</dbReference>
<dbReference type="NCBIfam" id="TIGR01490">
    <property type="entry name" value="HAD-SF-IB-hyp1"/>
    <property type="match status" value="1"/>
</dbReference>
<dbReference type="PANTHER" id="PTHR43344">
    <property type="entry name" value="PHOSPHOSERINE PHOSPHATASE"/>
    <property type="match status" value="1"/>
</dbReference>
<dbReference type="PANTHER" id="PTHR43344:SF15">
    <property type="entry name" value="PHOSPHOSERINE PHOSPHATASE SERB1"/>
    <property type="match status" value="1"/>
</dbReference>
<dbReference type="Pfam" id="PF12710">
    <property type="entry name" value="HAD"/>
    <property type="match status" value="1"/>
</dbReference>
<dbReference type="SUPFAM" id="SSF56784">
    <property type="entry name" value="HAD-like"/>
    <property type="match status" value="1"/>
</dbReference>
<accession>Q49823</accession>
<keyword id="KW-0378">Hydrolase</keyword>
<keyword id="KW-0460">Magnesium</keyword>
<keyword id="KW-0479">Metal-binding</keyword>
<keyword id="KW-1185">Reference proteome</keyword>
<protein>
    <recommendedName>
        <fullName>Putative hydrolase ML2424</fullName>
        <ecNumber>3.1.-.-</ecNumber>
    </recommendedName>
</protein>
<comment type="cofactor">
    <cofactor evidence="1">
        <name>Mg(2+)</name>
        <dbReference type="ChEBI" id="CHEBI:18420"/>
    </cofactor>
    <text evidence="1">Binds 1 Mg(2+) ion per subunit.</text>
</comment>
<comment type="similarity">
    <text evidence="3">Belongs to the HAD-like hydrolase superfamily. SerB family.</text>
</comment>
<reference key="1">
    <citation type="submission" date="1994-03" db="EMBL/GenBank/DDBJ databases">
        <authorList>
            <person name="Smith D.R."/>
            <person name="Robison K."/>
        </authorList>
    </citation>
    <scope>NUCLEOTIDE SEQUENCE [GENOMIC DNA]</scope>
</reference>
<reference key="2">
    <citation type="journal article" date="2001" name="Nature">
        <title>Massive gene decay in the leprosy bacillus.</title>
        <authorList>
            <person name="Cole S.T."/>
            <person name="Eiglmeier K."/>
            <person name="Parkhill J."/>
            <person name="James K.D."/>
            <person name="Thomson N.R."/>
            <person name="Wheeler P.R."/>
            <person name="Honore N."/>
            <person name="Garnier T."/>
            <person name="Churcher C.M."/>
            <person name="Harris D.E."/>
            <person name="Mungall K.L."/>
            <person name="Basham D."/>
            <person name="Brown D."/>
            <person name="Chillingworth T."/>
            <person name="Connor R."/>
            <person name="Davies R.M."/>
            <person name="Devlin K."/>
            <person name="Duthoy S."/>
            <person name="Feltwell T."/>
            <person name="Fraser A."/>
            <person name="Hamlin N."/>
            <person name="Holroyd S."/>
            <person name="Hornsby T."/>
            <person name="Jagels K."/>
            <person name="Lacroix C."/>
            <person name="Maclean J."/>
            <person name="Moule S."/>
            <person name="Murphy L.D."/>
            <person name="Oliver K."/>
            <person name="Quail M.A."/>
            <person name="Rajandream M.A."/>
            <person name="Rutherford K.M."/>
            <person name="Rutter S."/>
            <person name="Seeger K."/>
            <person name="Simon S."/>
            <person name="Simmonds M."/>
            <person name="Skelton J."/>
            <person name="Squares R."/>
            <person name="Squares S."/>
            <person name="Stevens K."/>
            <person name="Taylor K."/>
            <person name="Whitehead S."/>
            <person name="Woodward J.R."/>
            <person name="Barrell B.G."/>
        </authorList>
    </citation>
    <scope>NUCLEOTIDE SEQUENCE [LARGE SCALE GENOMIC DNA]</scope>
    <source>
        <strain>TN</strain>
    </source>
</reference>
<organism>
    <name type="scientific">Mycobacterium leprae (strain TN)</name>
    <dbReference type="NCBI Taxonomy" id="272631"/>
    <lineage>
        <taxon>Bacteria</taxon>
        <taxon>Bacillati</taxon>
        <taxon>Actinomycetota</taxon>
        <taxon>Actinomycetes</taxon>
        <taxon>Mycobacteriales</taxon>
        <taxon>Mycobacteriaceae</taxon>
        <taxon>Mycobacterium</taxon>
    </lineage>
</organism>
<name>Y2424_MYCLE</name>
<evidence type="ECO:0000250" key="1"/>
<evidence type="ECO:0000255" key="2"/>
<evidence type="ECO:0000305" key="3"/>